<accession>A6TL07</accession>
<sequence length="356" mass="39846">MEKLYINLDENSYWIYIGKGLLPTLGKHVAGADKILLITDENVEKYYGDQITQIVEGRILEKVILRPGEPTKNLGNVGHLLEIMLEKGLTRSSKVIALGGGVIGDIAGFTASIYMRGIDFIQVPTTLLAQVDSSVGGKTGVNLEQGKNMVGSFYQPKVVVIDIDLLKTLPHRELISGLGEIIKYGIIYDGEFFDYINENLWNLLALEETVVTKIIKRCCEIKAAIVSQDEQEMGVRKILNFGHTIGHGIEALTHYEKYTHGEAVILGMYYEAQIAKNRGYIDESYFRDIEMIIRKTGLDLNISQFILTDLLDAMTKDKKNKGGKISFILPRGKGNVQEVLLTPEELATFLYTYLYV</sequence>
<proteinExistence type="inferred from homology"/>
<evidence type="ECO:0000255" key="1">
    <source>
        <dbReference type="HAMAP-Rule" id="MF_00110"/>
    </source>
</evidence>
<comment type="function">
    <text evidence="1">Catalyzes the conversion of 3-deoxy-D-arabino-heptulosonate 7-phosphate (DAHP) to dehydroquinate (DHQ).</text>
</comment>
<comment type="catalytic activity">
    <reaction evidence="1">
        <text>7-phospho-2-dehydro-3-deoxy-D-arabino-heptonate = 3-dehydroquinate + phosphate</text>
        <dbReference type="Rhea" id="RHEA:21968"/>
        <dbReference type="ChEBI" id="CHEBI:32364"/>
        <dbReference type="ChEBI" id="CHEBI:43474"/>
        <dbReference type="ChEBI" id="CHEBI:58394"/>
        <dbReference type="EC" id="4.2.3.4"/>
    </reaction>
</comment>
<comment type="cofactor">
    <cofactor evidence="1">
        <name>Co(2+)</name>
        <dbReference type="ChEBI" id="CHEBI:48828"/>
    </cofactor>
    <cofactor evidence="1">
        <name>Zn(2+)</name>
        <dbReference type="ChEBI" id="CHEBI:29105"/>
    </cofactor>
    <text evidence="1">Binds 1 divalent metal cation per subunit. Can use either Co(2+) or Zn(2+).</text>
</comment>
<comment type="cofactor">
    <cofactor evidence="1">
        <name>NAD(+)</name>
        <dbReference type="ChEBI" id="CHEBI:57540"/>
    </cofactor>
</comment>
<comment type="pathway">
    <text evidence="1">Metabolic intermediate biosynthesis; chorismate biosynthesis; chorismate from D-erythrose 4-phosphate and phosphoenolpyruvate: step 2/7.</text>
</comment>
<comment type="subcellular location">
    <subcellularLocation>
        <location evidence="1">Cytoplasm</location>
    </subcellularLocation>
</comment>
<comment type="similarity">
    <text evidence="1">Belongs to the sugar phosphate cyclases superfamily. Dehydroquinate synthase family.</text>
</comment>
<name>AROB_ALKMQ</name>
<gene>
    <name evidence="1" type="primary">aroB</name>
    <name type="ordered locus">Amet_0650</name>
</gene>
<dbReference type="EC" id="4.2.3.4" evidence="1"/>
<dbReference type="EMBL" id="CP000724">
    <property type="protein sequence ID" value="ABR46875.1"/>
    <property type="molecule type" value="Genomic_DNA"/>
</dbReference>
<dbReference type="RefSeq" id="WP_011971783.1">
    <property type="nucleotide sequence ID" value="NC_009633.1"/>
</dbReference>
<dbReference type="SMR" id="A6TL07"/>
<dbReference type="STRING" id="293826.Amet_0650"/>
<dbReference type="KEGG" id="amt:Amet_0650"/>
<dbReference type="eggNOG" id="COG0337">
    <property type="taxonomic scope" value="Bacteria"/>
</dbReference>
<dbReference type="HOGENOM" id="CLU_001201_0_2_9"/>
<dbReference type="OrthoDB" id="9806583at2"/>
<dbReference type="UniPathway" id="UPA00053">
    <property type="reaction ID" value="UER00085"/>
</dbReference>
<dbReference type="Proteomes" id="UP000001572">
    <property type="component" value="Chromosome"/>
</dbReference>
<dbReference type="GO" id="GO:0005737">
    <property type="term" value="C:cytoplasm"/>
    <property type="evidence" value="ECO:0007669"/>
    <property type="project" value="UniProtKB-SubCell"/>
</dbReference>
<dbReference type="GO" id="GO:0003856">
    <property type="term" value="F:3-dehydroquinate synthase activity"/>
    <property type="evidence" value="ECO:0007669"/>
    <property type="project" value="UniProtKB-UniRule"/>
</dbReference>
<dbReference type="GO" id="GO:0046872">
    <property type="term" value="F:metal ion binding"/>
    <property type="evidence" value="ECO:0007669"/>
    <property type="project" value="UniProtKB-KW"/>
</dbReference>
<dbReference type="GO" id="GO:0000166">
    <property type="term" value="F:nucleotide binding"/>
    <property type="evidence" value="ECO:0007669"/>
    <property type="project" value="UniProtKB-KW"/>
</dbReference>
<dbReference type="GO" id="GO:0008652">
    <property type="term" value="P:amino acid biosynthetic process"/>
    <property type="evidence" value="ECO:0007669"/>
    <property type="project" value="UniProtKB-KW"/>
</dbReference>
<dbReference type="GO" id="GO:0009073">
    <property type="term" value="P:aromatic amino acid family biosynthetic process"/>
    <property type="evidence" value="ECO:0007669"/>
    <property type="project" value="UniProtKB-KW"/>
</dbReference>
<dbReference type="GO" id="GO:0009423">
    <property type="term" value="P:chorismate biosynthetic process"/>
    <property type="evidence" value="ECO:0007669"/>
    <property type="project" value="UniProtKB-UniRule"/>
</dbReference>
<dbReference type="CDD" id="cd08195">
    <property type="entry name" value="DHQS"/>
    <property type="match status" value="1"/>
</dbReference>
<dbReference type="FunFam" id="3.40.50.1970:FF:000007">
    <property type="entry name" value="Pentafunctional AROM polypeptide"/>
    <property type="match status" value="1"/>
</dbReference>
<dbReference type="Gene3D" id="3.40.50.1970">
    <property type="match status" value="1"/>
</dbReference>
<dbReference type="Gene3D" id="1.20.1090.10">
    <property type="entry name" value="Dehydroquinate synthase-like - alpha domain"/>
    <property type="match status" value="1"/>
</dbReference>
<dbReference type="HAMAP" id="MF_00110">
    <property type="entry name" value="DHQ_synthase"/>
    <property type="match status" value="1"/>
</dbReference>
<dbReference type="InterPro" id="IPR050071">
    <property type="entry name" value="Dehydroquinate_synthase"/>
</dbReference>
<dbReference type="InterPro" id="IPR016037">
    <property type="entry name" value="DHQ_synth_AroB"/>
</dbReference>
<dbReference type="InterPro" id="IPR030963">
    <property type="entry name" value="DHQ_synth_fam"/>
</dbReference>
<dbReference type="InterPro" id="IPR030960">
    <property type="entry name" value="DHQS/DOIS_N"/>
</dbReference>
<dbReference type="InterPro" id="IPR056179">
    <property type="entry name" value="DHQS_C"/>
</dbReference>
<dbReference type="NCBIfam" id="TIGR01357">
    <property type="entry name" value="aroB"/>
    <property type="match status" value="1"/>
</dbReference>
<dbReference type="PANTHER" id="PTHR43622">
    <property type="entry name" value="3-DEHYDROQUINATE SYNTHASE"/>
    <property type="match status" value="1"/>
</dbReference>
<dbReference type="PANTHER" id="PTHR43622:SF1">
    <property type="entry name" value="3-DEHYDROQUINATE SYNTHASE"/>
    <property type="match status" value="1"/>
</dbReference>
<dbReference type="Pfam" id="PF01761">
    <property type="entry name" value="DHQ_synthase"/>
    <property type="match status" value="1"/>
</dbReference>
<dbReference type="Pfam" id="PF24621">
    <property type="entry name" value="DHQS_C"/>
    <property type="match status" value="1"/>
</dbReference>
<dbReference type="PIRSF" id="PIRSF001455">
    <property type="entry name" value="DHQ_synth"/>
    <property type="match status" value="1"/>
</dbReference>
<dbReference type="SUPFAM" id="SSF56796">
    <property type="entry name" value="Dehydroquinate synthase-like"/>
    <property type="match status" value="1"/>
</dbReference>
<reference key="1">
    <citation type="journal article" date="2016" name="Genome Announc.">
        <title>Complete genome sequence of Alkaliphilus metalliredigens strain QYMF, an alkaliphilic and metal-reducing bacterium isolated from borax-contaminated leachate ponds.</title>
        <authorList>
            <person name="Hwang C."/>
            <person name="Copeland A."/>
            <person name="Lucas S."/>
            <person name="Lapidus A."/>
            <person name="Barry K."/>
            <person name="Detter J.C."/>
            <person name="Glavina Del Rio T."/>
            <person name="Hammon N."/>
            <person name="Israni S."/>
            <person name="Dalin E."/>
            <person name="Tice H."/>
            <person name="Pitluck S."/>
            <person name="Chertkov O."/>
            <person name="Brettin T."/>
            <person name="Bruce D."/>
            <person name="Han C."/>
            <person name="Schmutz J."/>
            <person name="Larimer F."/>
            <person name="Land M.L."/>
            <person name="Hauser L."/>
            <person name="Kyrpides N."/>
            <person name="Mikhailova N."/>
            <person name="Ye Q."/>
            <person name="Zhou J."/>
            <person name="Richardson P."/>
            <person name="Fields M.W."/>
        </authorList>
    </citation>
    <scope>NUCLEOTIDE SEQUENCE [LARGE SCALE GENOMIC DNA]</scope>
    <source>
        <strain>QYMF</strain>
    </source>
</reference>
<organism>
    <name type="scientific">Alkaliphilus metalliredigens (strain QYMF)</name>
    <dbReference type="NCBI Taxonomy" id="293826"/>
    <lineage>
        <taxon>Bacteria</taxon>
        <taxon>Bacillati</taxon>
        <taxon>Bacillota</taxon>
        <taxon>Clostridia</taxon>
        <taxon>Peptostreptococcales</taxon>
        <taxon>Natronincolaceae</taxon>
        <taxon>Alkaliphilus</taxon>
    </lineage>
</organism>
<keyword id="KW-0028">Amino-acid biosynthesis</keyword>
<keyword id="KW-0057">Aromatic amino acid biosynthesis</keyword>
<keyword id="KW-0170">Cobalt</keyword>
<keyword id="KW-0963">Cytoplasm</keyword>
<keyword id="KW-0456">Lyase</keyword>
<keyword id="KW-0479">Metal-binding</keyword>
<keyword id="KW-0520">NAD</keyword>
<keyword id="KW-0547">Nucleotide-binding</keyword>
<keyword id="KW-1185">Reference proteome</keyword>
<keyword id="KW-0862">Zinc</keyword>
<protein>
    <recommendedName>
        <fullName evidence="1">3-dehydroquinate synthase</fullName>
        <shortName evidence="1">DHQS</shortName>
        <ecNumber evidence="1">4.2.3.4</ecNumber>
    </recommendedName>
</protein>
<feature type="chain" id="PRO_1000094450" description="3-dehydroquinate synthase">
    <location>
        <begin position="1"/>
        <end position="356"/>
    </location>
</feature>
<feature type="binding site" evidence="1">
    <location>
        <begin position="101"/>
        <end position="105"/>
    </location>
    <ligand>
        <name>NAD(+)</name>
        <dbReference type="ChEBI" id="CHEBI:57540"/>
    </ligand>
</feature>
<feature type="binding site" evidence="1">
    <location>
        <begin position="125"/>
        <end position="126"/>
    </location>
    <ligand>
        <name>NAD(+)</name>
        <dbReference type="ChEBI" id="CHEBI:57540"/>
    </ligand>
</feature>
<feature type="binding site" evidence="1">
    <location>
        <position position="138"/>
    </location>
    <ligand>
        <name>NAD(+)</name>
        <dbReference type="ChEBI" id="CHEBI:57540"/>
    </ligand>
</feature>
<feature type="binding site" evidence="1">
    <location>
        <position position="147"/>
    </location>
    <ligand>
        <name>NAD(+)</name>
        <dbReference type="ChEBI" id="CHEBI:57540"/>
    </ligand>
</feature>
<feature type="binding site" evidence="1">
    <location>
        <position position="180"/>
    </location>
    <ligand>
        <name>Zn(2+)</name>
        <dbReference type="ChEBI" id="CHEBI:29105"/>
    </ligand>
</feature>
<feature type="binding site" evidence="1">
    <location>
        <position position="243"/>
    </location>
    <ligand>
        <name>Zn(2+)</name>
        <dbReference type="ChEBI" id="CHEBI:29105"/>
    </ligand>
</feature>
<feature type="binding site" evidence="1">
    <location>
        <position position="260"/>
    </location>
    <ligand>
        <name>Zn(2+)</name>
        <dbReference type="ChEBI" id="CHEBI:29105"/>
    </ligand>
</feature>